<protein>
    <recommendedName>
        <fullName evidence="2">Uncharacterized protein NDUFV1-DT</fullName>
    </recommendedName>
    <alternativeName>
        <fullName>NDUFV1 divergent transcript</fullName>
    </alternativeName>
</protein>
<keyword id="KW-1185">Reference proteome</keyword>
<sequence>MTQLPELGLRSPNNKSPTGPHPLEHLLARLLKRRRRSTLMSSPRSLLCSISGPGSHLLSTHPILCHSVYQPPQPASRPQAKRYQGLLPVPLAPHPLCLSGQLYLPNIPCTVIDGCGPVISHLKLTMYPWGLPPSHLGSSSPFSANMEQWDYYKSQTRFAPFLPESFCGSPLPSEQSSRPFGLAFKVLCAATCQPPQFQLLWLCPYKLDLHQRICLPPNLALVLLGALWTSPPPGSFLQPPYNRPYKLYKTN</sequence>
<accession>Q8NBR9</accession>
<name>CK072_HUMAN</name>
<feature type="chain" id="PRO_0000263095" description="Uncharacterized protein NDUFV1-DT">
    <location>
        <begin position="1"/>
        <end position="251"/>
    </location>
</feature>
<feature type="region of interest" description="Disordered" evidence="1">
    <location>
        <begin position="1"/>
        <end position="22"/>
    </location>
</feature>
<feature type="sequence variant" id="VAR_029584" description="In dbSNP:rs12421329.">
    <original>P</original>
    <variation>T</variation>
    <location>
        <position position="22"/>
    </location>
</feature>
<organism>
    <name type="scientific">Homo sapiens</name>
    <name type="common">Human</name>
    <dbReference type="NCBI Taxonomy" id="9606"/>
    <lineage>
        <taxon>Eukaryota</taxon>
        <taxon>Metazoa</taxon>
        <taxon>Chordata</taxon>
        <taxon>Craniata</taxon>
        <taxon>Vertebrata</taxon>
        <taxon>Euteleostomi</taxon>
        <taxon>Mammalia</taxon>
        <taxon>Eutheria</taxon>
        <taxon>Euarchontoglires</taxon>
        <taxon>Primates</taxon>
        <taxon>Haplorrhini</taxon>
        <taxon>Catarrhini</taxon>
        <taxon>Hominidae</taxon>
        <taxon>Homo</taxon>
    </lineage>
</organism>
<evidence type="ECO:0000256" key="1">
    <source>
        <dbReference type="SAM" id="MobiDB-lite"/>
    </source>
</evidence>
<evidence type="ECO:0000312" key="2">
    <source>
        <dbReference type="HGNC" id="HGNC:26915"/>
    </source>
</evidence>
<reference key="1">
    <citation type="journal article" date="2004" name="Nat. Genet.">
        <title>Complete sequencing and characterization of 21,243 full-length human cDNAs.</title>
        <authorList>
            <person name="Ota T."/>
            <person name="Suzuki Y."/>
            <person name="Nishikawa T."/>
            <person name="Otsuki T."/>
            <person name="Sugiyama T."/>
            <person name="Irie R."/>
            <person name="Wakamatsu A."/>
            <person name="Hayashi K."/>
            <person name="Sato H."/>
            <person name="Nagai K."/>
            <person name="Kimura K."/>
            <person name="Makita H."/>
            <person name="Sekine M."/>
            <person name="Obayashi M."/>
            <person name="Nishi T."/>
            <person name="Shibahara T."/>
            <person name="Tanaka T."/>
            <person name="Ishii S."/>
            <person name="Yamamoto J."/>
            <person name="Saito K."/>
            <person name="Kawai Y."/>
            <person name="Isono Y."/>
            <person name="Nakamura Y."/>
            <person name="Nagahari K."/>
            <person name="Murakami K."/>
            <person name="Yasuda T."/>
            <person name="Iwayanagi T."/>
            <person name="Wagatsuma M."/>
            <person name="Shiratori A."/>
            <person name="Sudo H."/>
            <person name="Hosoiri T."/>
            <person name="Kaku Y."/>
            <person name="Kodaira H."/>
            <person name="Kondo H."/>
            <person name="Sugawara M."/>
            <person name="Takahashi M."/>
            <person name="Kanda K."/>
            <person name="Yokoi T."/>
            <person name="Furuya T."/>
            <person name="Kikkawa E."/>
            <person name="Omura Y."/>
            <person name="Abe K."/>
            <person name="Kamihara K."/>
            <person name="Katsuta N."/>
            <person name="Sato K."/>
            <person name="Tanikawa M."/>
            <person name="Yamazaki M."/>
            <person name="Ninomiya K."/>
            <person name="Ishibashi T."/>
            <person name="Yamashita H."/>
            <person name="Murakawa K."/>
            <person name="Fujimori K."/>
            <person name="Tanai H."/>
            <person name="Kimata M."/>
            <person name="Watanabe M."/>
            <person name="Hiraoka S."/>
            <person name="Chiba Y."/>
            <person name="Ishida S."/>
            <person name="Ono Y."/>
            <person name="Takiguchi S."/>
            <person name="Watanabe S."/>
            <person name="Yosida M."/>
            <person name="Hotuta T."/>
            <person name="Kusano J."/>
            <person name="Kanehori K."/>
            <person name="Takahashi-Fujii A."/>
            <person name="Hara H."/>
            <person name="Tanase T.-O."/>
            <person name="Nomura Y."/>
            <person name="Togiya S."/>
            <person name="Komai F."/>
            <person name="Hara R."/>
            <person name="Takeuchi K."/>
            <person name="Arita M."/>
            <person name="Imose N."/>
            <person name="Musashino K."/>
            <person name="Yuuki H."/>
            <person name="Oshima A."/>
            <person name="Sasaki N."/>
            <person name="Aotsuka S."/>
            <person name="Yoshikawa Y."/>
            <person name="Matsunawa H."/>
            <person name="Ichihara T."/>
            <person name="Shiohata N."/>
            <person name="Sano S."/>
            <person name="Moriya S."/>
            <person name="Momiyama H."/>
            <person name="Satoh N."/>
            <person name="Takami S."/>
            <person name="Terashima Y."/>
            <person name="Suzuki O."/>
            <person name="Nakagawa S."/>
            <person name="Senoh A."/>
            <person name="Mizoguchi H."/>
            <person name="Goto Y."/>
            <person name="Shimizu F."/>
            <person name="Wakebe H."/>
            <person name="Hishigaki H."/>
            <person name="Watanabe T."/>
            <person name="Sugiyama A."/>
            <person name="Takemoto M."/>
            <person name="Kawakami B."/>
            <person name="Yamazaki M."/>
            <person name="Watanabe K."/>
            <person name="Kumagai A."/>
            <person name="Itakura S."/>
            <person name="Fukuzumi Y."/>
            <person name="Fujimori Y."/>
            <person name="Komiyama M."/>
            <person name="Tashiro H."/>
            <person name="Tanigami A."/>
            <person name="Fujiwara T."/>
            <person name="Ono T."/>
            <person name="Yamada K."/>
            <person name="Fujii Y."/>
            <person name="Ozaki K."/>
            <person name="Hirao M."/>
            <person name="Ohmori Y."/>
            <person name="Kawabata A."/>
            <person name="Hikiji T."/>
            <person name="Kobatake N."/>
            <person name="Inagaki H."/>
            <person name="Ikema Y."/>
            <person name="Okamoto S."/>
            <person name="Okitani R."/>
            <person name="Kawakami T."/>
            <person name="Noguchi S."/>
            <person name="Itoh T."/>
            <person name="Shigeta K."/>
            <person name="Senba T."/>
            <person name="Matsumura K."/>
            <person name="Nakajima Y."/>
            <person name="Mizuno T."/>
            <person name="Morinaga M."/>
            <person name="Sasaki M."/>
            <person name="Togashi T."/>
            <person name="Oyama M."/>
            <person name="Hata H."/>
            <person name="Watanabe M."/>
            <person name="Komatsu T."/>
            <person name="Mizushima-Sugano J."/>
            <person name="Satoh T."/>
            <person name="Shirai Y."/>
            <person name="Takahashi Y."/>
            <person name="Nakagawa K."/>
            <person name="Okumura K."/>
            <person name="Nagase T."/>
            <person name="Nomura N."/>
            <person name="Kikuchi H."/>
            <person name="Masuho Y."/>
            <person name="Yamashita R."/>
            <person name="Nakai K."/>
            <person name="Yada T."/>
            <person name="Nakamura Y."/>
            <person name="Ohara O."/>
            <person name="Isogai T."/>
            <person name="Sugano S."/>
        </authorList>
    </citation>
    <scope>NUCLEOTIDE SEQUENCE [LARGE SCALE MRNA]</scope>
    <source>
        <tissue>Retinoblastoma</tissue>
    </source>
</reference>
<reference key="2">
    <citation type="journal article" date="2006" name="Nature">
        <title>Human chromosome 11 DNA sequence and analysis including novel gene identification.</title>
        <authorList>
            <person name="Taylor T.D."/>
            <person name="Noguchi H."/>
            <person name="Totoki Y."/>
            <person name="Toyoda A."/>
            <person name="Kuroki Y."/>
            <person name="Dewar K."/>
            <person name="Lloyd C."/>
            <person name="Itoh T."/>
            <person name="Takeda T."/>
            <person name="Kim D.-W."/>
            <person name="She X."/>
            <person name="Barlow K.F."/>
            <person name="Bloom T."/>
            <person name="Bruford E."/>
            <person name="Chang J.L."/>
            <person name="Cuomo C.A."/>
            <person name="Eichler E."/>
            <person name="FitzGerald M.G."/>
            <person name="Jaffe D.B."/>
            <person name="LaButti K."/>
            <person name="Nicol R."/>
            <person name="Park H.-S."/>
            <person name="Seaman C."/>
            <person name="Sougnez C."/>
            <person name="Yang X."/>
            <person name="Zimmer A.R."/>
            <person name="Zody M.C."/>
            <person name="Birren B.W."/>
            <person name="Nusbaum C."/>
            <person name="Fujiyama A."/>
            <person name="Hattori M."/>
            <person name="Rogers J."/>
            <person name="Lander E.S."/>
            <person name="Sakaki Y."/>
        </authorList>
    </citation>
    <scope>NUCLEOTIDE SEQUENCE [LARGE SCALE GENOMIC DNA]</scope>
</reference>
<reference key="3">
    <citation type="journal article" date="2004" name="Genome Res.">
        <title>The status, quality, and expansion of the NIH full-length cDNA project: the Mammalian Gene Collection (MGC).</title>
        <authorList>
            <consortium name="The MGC Project Team"/>
        </authorList>
    </citation>
    <scope>NUCLEOTIDE SEQUENCE [LARGE SCALE MRNA]</scope>
</reference>
<proteinExistence type="evidence at transcript level"/>
<dbReference type="EMBL" id="AK075315">
    <property type="protein sequence ID" value="BAC11541.1"/>
    <property type="molecule type" value="mRNA"/>
</dbReference>
<dbReference type="EMBL" id="AP003385">
    <property type="status" value="NOT_ANNOTATED_CDS"/>
    <property type="molecule type" value="Genomic_DNA"/>
</dbReference>
<dbReference type="EMBL" id="BC104448">
    <property type="status" value="NOT_ANNOTATED_CDS"/>
    <property type="molecule type" value="mRNA"/>
</dbReference>
<dbReference type="EMBL" id="BC104449">
    <property type="status" value="NOT_ANNOTATED_CDS"/>
    <property type="molecule type" value="mRNA"/>
</dbReference>
<dbReference type="GlyGen" id="Q8NBR9">
    <property type="glycosylation" value="1 site, 1 O-linked glycan (1 site)"/>
</dbReference>
<dbReference type="iPTMnet" id="Q8NBR9"/>
<dbReference type="PhosphoSitePlus" id="Q8NBR9"/>
<dbReference type="BioMuta" id="HGNC:26915"/>
<dbReference type="AGR" id="HGNC:26915"/>
<dbReference type="GeneCards" id="NDUFV1-DT"/>
<dbReference type="HGNC" id="HGNC:26915">
    <property type="gene designation" value="NDUFV1-DT"/>
</dbReference>
<dbReference type="neXtProt" id="NX_Q8NBR9"/>
<dbReference type="InParanoid" id="Q8NBR9"/>
<dbReference type="PAN-GO" id="Q8NBR9">
    <property type="GO annotations" value="0 GO annotations based on evolutionary models"/>
</dbReference>
<dbReference type="PhylomeDB" id="Q8NBR9"/>
<dbReference type="PathwayCommons" id="Q8NBR9"/>
<dbReference type="Pharos" id="Q8NBR9">
    <property type="development level" value="Tdark"/>
</dbReference>
<dbReference type="PRO" id="PR:Q8NBR9"/>
<dbReference type="Proteomes" id="UP000005640">
    <property type="component" value="Unplaced"/>
</dbReference>
<dbReference type="RNAct" id="Q8NBR9">
    <property type="molecule type" value="protein"/>
</dbReference>
<gene>
    <name evidence="2" type="primary">NDUFV1-DT</name>
    <name type="synonym">C11orf72</name>
</gene>